<sequence>MSNMAPLPTMGVEQQALSLSCPLLPHDDEKHSDNLYEQATRHFGLSRDKIENVLPCTSFQCDVIDCAVDDRRHAIGHVVYDIPNTVDIQRLAAAWKEVVRQTPILRTGIFTSETGDSFQIVLKEGCLPWMYATCLGMKGAVIQDEAVAAMTGPRCNRYVVLEDPSTKQRLLIWTFSHALVDYTVQERILQRVLTVYDGRDVECPRIKDTEHVSRFWQQHFEGLDASVFPLLPSHLTVCNPNARAEHHISYTGPVQRKWSHTSICRAALAVLLSRFTHSSEALFGVVTEQSHNSEDQRRSIDGPARTVVPIRVLCAPDQYVSDVIGAITAHEHAMRGFEHAGLRNIRRTGDDGSAACGFQTVLLVTDGDAPKTPGSVLHRSVEESDRFMPCANRALLLDCQMAGNSASLVARYDHNVIDPRQMSRFLRQLGYLIQQFHHHVDLPLVKELDVVTAEDCAEIEKWNSERLTMQDALIHDTISKWAAGDPNKAAVFAWDGEWTYAELDNISSRLAVYIQSLDLRPGQAILPLCFEKSKWVVATILAVLKVGRAFTLIDPCDPSARMAQVCQQTSATVALTSKLHNTTLRSVVSRCIVVDDDLLRSLPHADGRLKATVKPQDLAYVIFTSGSTGEPKGIMIEHRGFVSCAMKFGPALGMDEHTRALQFASYAFGACLVEVVTALMHGGCVCIPSDDDRLNNVPEFIKRAQVNWVILTPSYIGTFQPEDVPGLQTLVLVGEPISASIRDTWASQVRLLNAYGQSESSTMCSVTEVSPLSLEPNNIGRAVGARSWIIDPDEPDRLAPIGCIGELVIESPGIARDYIIAPPPDKSPFLLAPPAWYPAGKLSNAFKFYKTGDLVRYGPDGTIVCLGRKDSQVKIRGQRVEISAVEASLRRQLPSDIMPVAEAIKRSDSSGSTVLTAFLIGSSKSGDGNGHALSAADAVILDHGATNEINAKLQQILPQHSVPSYYIHMENLPRTATGKADRKMLRSIASKLLGELSQNVTSQPIEKHDAPATGIEVKLKELWFLSLNLNPNSQDVGASFFDLGGNSIIAIKMVNMARSAGIALKVSDIFQNPTLAGLVDVIGRDPAPYNLIPTTAYSGPVEQSFAQGRLWFLDQIELDALWYLLPYAVRMRGPLHIDALTIALLAIQQRHETLRTTFEEQDGVGVQVVHASPISDLRIIDVSGDRNSDYLQLLHQEQTTPFILACQAGWRVSLIRLGEDDHILSIVMHHIISDGWSIDILRRELSNFYSAALRGSDPLSVVSPLPLHYRDFSVWQKQVEQETEHERQLEYWVKQLADSSAAEFLTDFPRPNILSGEAGSVPVTIEGELYERLQEFCKVEQMTPFAVLLGAFRATHYRLTGAEDSIIGTPIANRNRQELENMIGFFVNTQCMRITVDGDDTFESLVRQVRTTATAAFEHQDVPFERVVTALLPRSRDLSRNPLAQLTFALHSQQDLGKFELEGLVAEPVSNKVYTRFDVEFHLFQEAGRLSGNVAFAADLFKPETISNVVAIFFQILRQGIRQPRTPIAVLPLTDGLADLRAMGLLEIEKAEYPRESSVVDVFRKQVAAHPHAFAVVDSASRLTYADLDRQSDQLATWLGRRNMTAETLVGVLAPRSCQTVVAILGILKANLAYLPLDVNCPTARLQTILSTLNRHKLVLLGSNATTPDVQIPDVELVRISDILDRPINGQAKLNGHTKSNGYSKPNGYTHLKGYSNLNGYSKQNGYAQLNGHRERNNYLDLNGHSLLNGNSDITTSGPSATSLAYVIFTSGSTGKPKGVMVEHRSIIRLAKKNRIISRFPSVAKVAHLSNIAFDAATWEMFAALLNGGTLVCIDYMTTLDSKTLEAAFAREQINAALLTPALLKQCLANIPTTLGRLSALVIGGDRLDGQDAIAAHALVGAGVYNAYGPTENGVISTIYNITKNDSFINGVPIGCAISNSGAYITDPDQQLVPPGVMGELVVTGDGLARGYTDPALDAGRFVQIMINDKAVRAYRTGDRARYRVGDGQIEFFGRMDQQVKIRGHRIEPAEVERAILDQDSARDAVVVIRHQEGEEPEMVGFVATHGDHSAEQEEADDQVEGWKDFFESNTYADMDTIGQSAIGNDFTGWTSMYDGSEINKAEMQEWLDDTMRTLLDGQAPGHVLEIGTGSGMVLFNLGAGLQSYVGLEPSRSAATFVTKAINSTPALAGKAEVHVGTATDINRLRGLRPDLVVLNSVVQYFPTPEYLLEVVESLVRIPGVKRVVFGDIRSHATNRHFLAARALHSLGSKATKDAIRQKMTEMEEREEELLVDPAFFTALLQGQLADRIKHVEILPKNMRATNELSAYRYTAVIHVRGPEEQSRPVYPIQVNDWIDFQASRIDRRALLRLLQRSADAATVAVSNIPYSKTIVERHVVESLDNNNRENTHRAPDGAAWISAVRSKAERCTSLSVTDLVQLGEEAGFRVEVSAARQWSQSGALDAVFHRYNLPTQSNSRVLIQFPTEDGQTRRSATLTNRPLQRLQSRRFASQIREQLKAVLPSYMIPSRIVVIDQMPLNANGKVDRKELTRRAQIAPKSQAAPAKPVKQVDPFVNLEAILCEEFAEVLGMEVGVNDHFFQLGGHSLLATKLVARLSRRLNGRVSVRDVFDQPVISDLAVTLRQGLTLENAIPATPDSGYWEQTMSAPTTPSDDMEAVLCKEFADVLGVEVSATDSFFDLGGHSLMATKLAARISRRLDVPVSIKDIFDHSVPLNLARKIRLTQAKGHEATNGVQIANDAPFQLISVEDPEIFVQREIAPQLQCSPETILDVYPATQMQRVFLLNPVTGKPRSPTPFHIDFPPDADCASLMRACASLAKHFDIFRTVFLEARGELYQVVLKHVDVPIEMLQTEENINSATRSFLDVDAEKPIRLGQPLIRIAILEKPGSTLRVILRLSHALYDGLSLEHILHSLHILFFGGSLPPPPKFAGYMQHVASSRREGYDFWRSVLRDSSMTVIKGNNNTTPPPPPQQQSTPSGAHHASKVVTIPTQANTDSRITRATIFTTACALMLAKEDNSSDVVFGRTVSGRQGLPLAHQNVIGPCLNQVPVRARGLNRGTTHHRELLREMQEQYLNSLAFETLGYDEIKAHCTDWPDVPATASFGCCIVYQNFDSHPDSRVEEQRLQIGVLSRNYEAINEGLVHDLVIAGESEPDGDDLRVTVVANRRLCDEERLKRMLEELCGNIRALALV</sequence>
<organism>
    <name type="scientific">Rosellinia sp.</name>
    <name type="common">Mycelia sterilia</name>
    <dbReference type="NCBI Taxonomy" id="1769365"/>
    <lineage>
        <taxon>Eukaryota</taxon>
        <taxon>Fungi</taxon>
        <taxon>Dikarya</taxon>
        <taxon>Ascomycota</taxon>
        <taxon>Pezizomycotina</taxon>
        <taxon>Sordariomycetes</taxon>
        <taxon>Xylariomycetidae</taxon>
        <taxon>Xylariales</taxon>
        <taxon>Xylariaceae</taxon>
        <taxon>Rosellinia</taxon>
    </lineage>
</organism>
<reference key="1">
    <citation type="patent" date="2001-03-15" number="WO2001018179">
        <title>Cyclic depsipeptide synthetase and its gene and mass production system of cyclic depsipeptide.</title>
        <authorList>
            <person name="Mido N."/>
            <person name="Okakura K."/>
            <person name="Miyamoto K."/>
            <person name="Watanabe M."/>
            <person name="Yanai K."/>
            <person name="Yasutake T."/>
            <person name="Aihara S."/>
            <person name="Futamura T."/>
            <person name="Kleinkauf H."/>
            <person name="Murakami T."/>
        </authorList>
    </citation>
    <scope>NUCLEOTIDE SEQUENCE [GENOMIC DNA]</scope>
</reference>
<reference key="2">
    <citation type="journal article" date="1995" name="J. Antibiot.">
        <title>Anthelmintic profile of the cyclodepsipeptide PF1022A in in vitro and in vivo models.</title>
        <authorList>
            <person name="Conder G.A."/>
            <person name="Johnson S.S."/>
            <person name="Nowakowski D.S."/>
            <person name="Blake T.E."/>
            <person name="Dutton F.E."/>
            <person name="Nelson S.J."/>
            <person name="Thomas E.M."/>
            <person name="Davis J.P."/>
            <person name="Thompson D.P."/>
        </authorList>
    </citation>
    <scope>BIOTECHNOLOGY</scope>
</reference>
<reference key="3">
    <citation type="journal article" date="2000" name="J. Biol. Chem.">
        <title>Biosynthesis of PF1022A and related cyclooctadepsipeptides.</title>
        <authorList>
            <person name="Weckwerth W."/>
            <person name="Miyamoto K."/>
            <person name="Iinuma K."/>
            <person name="Krause M."/>
            <person name="Glinski M."/>
            <person name="Storm T."/>
            <person name="Bonse G."/>
            <person name="Kleinkauf H."/>
            <person name="Zocher R."/>
        </authorList>
    </citation>
    <scope>FUNCTION</scope>
    <scope>CATALYTIC ACTIVITY</scope>
    <scope>COFACTOR</scope>
    <scope>BIOPHYSICOCHEMICAL PROPERTIES</scope>
</reference>
<reference key="4">
    <citation type="journal article" date="2001" name="FASEB J.">
        <title>Latrophilin-like receptor from the parasitic nematode Haemonchus contortus as target for the anthelmintic depsipeptide PF1022A.</title>
        <authorList>
            <person name="Saeger B."/>
            <person name="Schmitt-Wrede H.P."/>
            <person name="Dehnhardt M."/>
            <person name="Benten W.P."/>
            <person name="Kruecken J."/>
            <person name="Harder A."/>
            <person name="Von Samson-Himmelstjerna G."/>
            <person name="Wiegand H."/>
            <person name="Wunderlich F."/>
        </authorList>
    </citation>
    <scope>BIOTECHNOLOGY</scope>
</reference>
<reference key="5">
    <citation type="journal article" date="2005" name="Parasitol. Res.">
        <title>Influence of the cyclooctadepsipeptides PF1022A and PF1022E as natural products on the design of semi-synthetic anthelmintics such as emodepside.</title>
        <authorList>
            <person name="Jeschke R."/>
            <person name="Iinuma K."/>
            <person name="Harder A."/>
            <person name="Schindler M."/>
            <person name="Murakami T."/>
        </authorList>
    </citation>
    <scope>BIOTECHNOLOGY</scope>
</reference>
<reference key="6">
    <citation type="journal article" date="2009" name="ChemBioChem">
        <title>In vitro synthesis of new cyclodepsipeptides of the PF1022-type: probing the alpha-D-hydroxy acid tolerance of PF1022 synthetase.</title>
        <authorList>
            <person name="Mueller J."/>
            <person name="Feifel S.C."/>
            <person name="Schmiederer T."/>
            <person name="Zocher R."/>
            <person name="Suessmuth R.D."/>
        </authorList>
    </citation>
    <scope>FUNCTION</scope>
    <scope>CATALYTIC ACTIVITY</scope>
</reference>
<accession>P9WEP7</accession>
<feature type="chain" id="PRO_0000454455" description="PF 1022-synthetase">
    <location>
        <begin position="1"/>
        <end position="3210"/>
    </location>
</feature>
<feature type="domain" description="Carrier 1" evidence="4">
    <location>
        <begin position="1010"/>
        <end position="1086"/>
    </location>
</feature>
<feature type="domain" description="Carrier 2" evidence="4">
    <location>
        <begin position="2570"/>
        <end position="2644"/>
    </location>
</feature>
<feature type="domain" description="Carrier 3" evidence="4">
    <location>
        <begin position="2668"/>
        <end position="2742"/>
    </location>
</feature>
<feature type="region of interest" description="Condensation 1" evidence="1 3">
    <location>
        <begin position="68"/>
        <end position="454"/>
    </location>
</feature>
<feature type="region of interest" description="Adenylation 1" evidence="1 3">
    <location>
        <begin position="483"/>
        <end position="876"/>
    </location>
</feature>
<feature type="region of interest" description="Condensation 2" evidence="1 3">
    <location>
        <begin position="1104"/>
        <end position="1534"/>
    </location>
</feature>
<feature type="region of interest" description="Adenylation 2" evidence="1 3">
    <location>
        <begin position="1563"/>
        <end position="2023"/>
    </location>
</feature>
<feature type="region of interest" description="S-adenosyl-L-methionine-dependent N-methyltransferase" evidence="1 3">
    <location>
        <begin position="2081"/>
        <end position="2236"/>
    </location>
</feature>
<feature type="region of interest" description="Condensation 3" evidence="1 3">
    <location>
        <begin position="2788"/>
        <end position="3203"/>
    </location>
</feature>
<feature type="region of interest" description="Disordered" evidence="5">
    <location>
        <begin position="2976"/>
        <end position="3002"/>
    </location>
</feature>
<feature type="modified residue" description="O-(pantetheine 4'-phosphoryl)serine" evidence="4">
    <location>
        <position position="1047"/>
    </location>
</feature>
<feature type="modified residue" description="O-(pantetheine 4'-phosphoryl)serine" evidence="4">
    <location>
        <position position="2604"/>
    </location>
</feature>
<feature type="modified residue" description="O-(pantetheine 4'-phosphoryl)serine" evidence="4">
    <location>
        <position position="2702"/>
    </location>
</feature>
<name>PFSYN_ROSSX</name>
<proteinExistence type="evidence at protein level"/>
<protein>
    <recommendedName>
        <fullName evidence="11">PF 1022-synthetase</fullName>
        <shortName evidence="11">PFSYN</shortName>
        <ecNumber evidence="6 9">2.1.1.-</ecNumber>
        <ecNumber evidence="6 9">6.3.2.-</ecNumber>
    </recommendedName>
    <alternativeName>
        <fullName evidence="12">Cyclooctadepsipeptide synthetase PFSYN</fullName>
    </alternativeName>
    <alternativeName>
        <fullName evidence="11">Nonribosomal peptide synthetase PFSYN</fullName>
    </alternativeName>
</protein>
<comment type="function">
    <text evidence="6 9">Nonribosomal peptide synthetase that synthesizes cyclooctadepsipeptides (CODPs) PF 1022 that show powerful broad-spectrum anthelmintic activity with low toxicity in animals (PubMed:10751395, PubMed:19072825). Couples 4 N-methyl-L-leucines and a varying content of alpha-D-hydroxy acids (D-lactates or D-phenyllactates) in an alternative fashion (PubMed:10751395, PubMed:19072825). The enzyme is capable of synthesizing all known natural cyclooctadepsipeptides of the PF1022 type differing in the content of D-lactate and D-phenyllactate, using from 4 D-lactates (PF 1022F) to 4 D-phenyllactates (PF 1022B), respectively (PubMed:10751395). The formation of different PF-related compounds is mainly controlled by the molar ratio of the hydroxy acids (PubMed:10751395). N-methylation of the substrate L-leucine takes place after covalent binding prior to peptide bond formation (PubMed:10751395).</text>
</comment>
<comment type="catalytic activity">
    <reaction evidence="6">
        <text>2 (R)-3-phenyllactate + 2 (R)-lactate + 4 L-leucine + 4 S-adenosyl-L-methionine + 8 ATP = PF1022A + 8 AMP + 4 S-adenosyl-L-homocysteine + 8 diphosphate + 8 H(+)</text>
        <dbReference type="Rhea" id="RHEA:68744"/>
        <dbReference type="ChEBI" id="CHEBI:11009"/>
        <dbReference type="ChEBI" id="CHEBI:15378"/>
        <dbReference type="ChEBI" id="CHEBI:16004"/>
        <dbReference type="ChEBI" id="CHEBI:30616"/>
        <dbReference type="ChEBI" id="CHEBI:33019"/>
        <dbReference type="ChEBI" id="CHEBI:57427"/>
        <dbReference type="ChEBI" id="CHEBI:57856"/>
        <dbReference type="ChEBI" id="CHEBI:59789"/>
        <dbReference type="ChEBI" id="CHEBI:180461"/>
        <dbReference type="ChEBI" id="CHEBI:456215"/>
    </reaction>
    <physiologicalReaction direction="left-to-right" evidence="6">
        <dbReference type="Rhea" id="RHEA:68745"/>
    </physiologicalReaction>
</comment>
<comment type="catalytic activity">
    <reaction evidence="6">
        <text>4 (R)-3-phenyllactate + 4 L-leucine + 4 S-adenosyl-L-methionine + 8 ATP = PF1022B + 8 AMP + 4 S-adenosyl-L-homocysteine + 8 diphosphate + 8 H(+)</text>
        <dbReference type="Rhea" id="RHEA:68756"/>
        <dbReference type="ChEBI" id="CHEBI:11009"/>
        <dbReference type="ChEBI" id="CHEBI:15378"/>
        <dbReference type="ChEBI" id="CHEBI:30616"/>
        <dbReference type="ChEBI" id="CHEBI:33019"/>
        <dbReference type="ChEBI" id="CHEBI:57427"/>
        <dbReference type="ChEBI" id="CHEBI:57856"/>
        <dbReference type="ChEBI" id="CHEBI:59789"/>
        <dbReference type="ChEBI" id="CHEBI:180462"/>
        <dbReference type="ChEBI" id="CHEBI:456215"/>
    </reaction>
    <physiologicalReaction direction="left-to-right" evidence="6">
        <dbReference type="Rhea" id="RHEA:68757"/>
    </physiologicalReaction>
</comment>
<comment type="catalytic activity">
    <reaction evidence="6">
        <text>3 (R)-3-phenyllactate + (R)-lactate + 4 L-leucine + 4 S-adenosyl-L-methionine + 8 ATP = PF1022C + 8 AMP + 4 S-adenosyl-L-homocysteine + 8 diphosphate + 8 H(+)</text>
        <dbReference type="Rhea" id="RHEA:68760"/>
        <dbReference type="ChEBI" id="CHEBI:11009"/>
        <dbReference type="ChEBI" id="CHEBI:15378"/>
        <dbReference type="ChEBI" id="CHEBI:16004"/>
        <dbReference type="ChEBI" id="CHEBI:30616"/>
        <dbReference type="ChEBI" id="CHEBI:33019"/>
        <dbReference type="ChEBI" id="CHEBI:57427"/>
        <dbReference type="ChEBI" id="CHEBI:57856"/>
        <dbReference type="ChEBI" id="CHEBI:59789"/>
        <dbReference type="ChEBI" id="CHEBI:180463"/>
        <dbReference type="ChEBI" id="CHEBI:456215"/>
    </reaction>
    <physiologicalReaction direction="left-to-right" evidence="6">
        <dbReference type="Rhea" id="RHEA:68761"/>
    </physiologicalReaction>
</comment>
<comment type="catalytic activity">
    <reaction evidence="6">
        <text>(R)-3-phenyllactate + 3 (R)-lactate + 4 L-leucine + 4 S-adenosyl-L-methionine + 8 ATP = PF1022D + 8 AMP + 4 S-adenosyl-L-homocysteine + 8 diphosphate + 8 H(+)</text>
        <dbReference type="Rhea" id="RHEA:68764"/>
        <dbReference type="ChEBI" id="CHEBI:11009"/>
        <dbReference type="ChEBI" id="CHEBI:15378"/>
        <dbReference type="ChEBI" id="CHEBI:16004"/>
        <dbReference type="ChEBI" id="CHEBI:30616"/>
        <dbReference type="ChEBI" id="CHEBI:33019"/>
        <dbReference type="ChEBI" id="CHEBI:57427"/>
        <dbReference type="ChEBI" id="CHEBI:57856"/>
        <dbReference type="ChEBI" id="CHEBI:59789"/>
        <dbReference type="ChEBI" id="CHEBI:180464"/>
        <dbReference type="ChEBI" id="CHEBI:456215"/>
    </reaction>
    <physiologicalReaction direction="left-to-right" evidence="6">
        <dbReference type="Rhea" id="RHEA:68765"/>
    </physiologicalReaction>
</comment>
<comment type="catalytic activity">
    <reaction evidence="6">
        <text>4 (R)-lactate + 4 L-leucine + 4 S-adenosyl-L-methionine + 8 ATP = PF1022F + 8 AMP + 4 S-adenosyl-L-homocysteine + 8 diphosphate + 8 H(+)</text>
        <dbReference type="Rhea" id="RHEA:68768"/>
        <dbReference type="ChEBI" id="CHEBI:15378"/>
        <dbReference type="ChEBI" id="CHEBI:16004"/>
        <dbReference type="ChEBI" id="CHEBI:30616"/>
        <dbReference type="ChEBI" id="CHEBI:33019"/>
        <dbReference type="ChEBI" id="CHEBI:57427"/>
        <dbReference type="ChEBI" id="CHEBI:57856"/>
        <dbReference type="ChEBI" id="CHEBI:59789"/>
        <dbReference type="ChEBI" id="CHEBI:180465"/>
        <dbReference type="ChEBI" id="CHEBI:456215"/>
    </reaction>
    <physiologicalReaction direction="left-to-right" evidence="6">
        <dbReference type="Rhea" id="RHEA:68769"/>
    </physiologicalReaction>
</comment>
<comment type="cofactor">
    <cofactor evidence="6">
        <name>pantetheine 4'-phosphate</name>
        <dbReference type="ChEBI" id="CHEBI:47942"/>
    </cofactor>
</comment>
<comment type="biophysicochemical properties">
    <kinetics>
        <KM evidence="6">0.77 uM for D-lactate</KM>
        <KM evidence="6">0.45 uM for D-phenyllactate</KM>
        <KM evidence="6">20 uM for L-leucine</KM>
    </kinetics>
</comment>
<comment type="domain">
    <text evidence="2">NRP synthetases are composed of discrete domains (adenylation (A), thiolation (T) or peptidyl carrier protein (PCP) and condensation (C) domains) which when grouped together are referred to as a single module (By similarity). Each module is responsible for the recognition (via the A domain) and incorporation of a single amino acid into the growing peptide product. Thus, an NRP synthetase is generally composed of one or more modules and can terminate in a thioesterase domain (TE) that releases the newly synthesized peptide from the enzyme (By similarity). Occasionally, additional domains required for further modifications are also present (By similarity). PF 1022 synthetase has the C1-A1-T1-C2-A2-MT-T2a-T2b-C3 domain organization (By similarity). The precursors D-hydroxycarboxylic acids and L-Leucine become activated at the A1 and the A2 domains (By similarity). N-methylation of the amino acid takes place at the MT-domain. The building blocks are transferred from one module to another by means of T-domains and are ultimately stored at the waiting position T2b (By similarity). Condensation of the building blocks and final cyclization and release from the enzyme is catalyzed by the C-domains (By similarity).</text>
</comment>
<comment type="biotechnology">
    <text evidence="7 8 10">The cyclooctadepsipeptides (CODP) of the PF 1022 type such as PF 1022A are described as powerful broad-spectrum anthelmintic neurotoxins that have low toxicity in animals (PubMed:7592027). PF 1022A has been shown to bind to the aminoterminus of a the latrophilin-like transmembrane receptor (HC-110R) from Haemonchus contortus (Rudolphi) and thereby induces an influx of external Ca(2+) into cells (PubMed:11344131). Both PF 1022A and PF 1022E can serve as valuable starting materials for the synthesis of semi-synthetic CODP derivatives with improved intrinsic anthelmintic potency and broad-spectrum activity (PubMed:16228266).</text>
</comment>
<comment type="similarity">
    <text evidence="13">Belongs to the NRP synthetase family.</text>
</comment>
<evidence type="ECO:0000250" key="1">
    <source>
        <dbReference type="UniProtKB" id="A0A0A1EA36"/>
    </source>
</evidence>
<evidence type="ECO:0000250" key="2">
    <source>
        <dbReference type="UniProtKB" id="Q00869"/>
    </source>
</evidence>
<evidence type="ECO:0000255" key="3"/>
<evidence type="ECO:0000255" key="4">
    <source>
        <dbReference type="PROSITE-ProRule" id="PRU00258"/>
    </source>
</evidence>
<evidence type="ECO:0000256" key="5">
    <source>
        <dbReference type="SAM" id="MobiDB-lite"/>
    </source>
</evidence>
<evidence type="ECO:0000269" key="6">
    <source>
    </source>
</evidence>
<evidence type="ECO:0000269" key="7">
    <source>
    </source>
</evidence>
<evidence type="ECO:0000269" key="8">
    <source>
    </source>
</evidence>
<evidence type="ECO:0000269" key="9">
    <source>
    </source>
</evidence>
<evidence type="ECO:0000269" key="10">
    <source>
    </source>
</evidence>
<evidence type="ECO:0000303" key="11">
    <source>
    </source>
</evidence>
<evidence type="ECO:0000303" key="12">
    <source>
    </source>
</evidence>
<evidence type="ECO:0000305" key="13"/>
<keyword id="KW-0436">Ligase</keyword>
<keyword id="KW-0489">Methyltransferase</keyword>
<keyword id="KW-0511">Multifunctional enzyme</keyword>
<keyword id="KW-0596">Phosphopantetheine</keyword>
<keyword id="KW-0597">Phosphoprotein</keyword>
<keyword id="KW-0677">Repeat</keyword>
<keyword id="KW-0808">Transferase</keyword>
<dbReference type="EC" id="2.1.1.-" evidence="6 9"/>
<dbReference type="EC" id="6.3.2.-" evidence="6 9"/>
<dbReference type="EMBL" id="BD013055">
    <property type="status" value="NOT_ANNOTATED_CDS"/>
    <property type="molecule type" value="Genomic_DNA"/>
</dbReference>
<dbReference type="SMR" id="P9WEP7"/>
<dbReference type="GO" id="GO:0005737">
    <property type="term" value="C:cytoplasm"/>
    <property type="evidence" value="ECO:0007669"/>
    <property type="project" value="TreeGrafter"/>
</dbReference>
<dbReference type="GO" id="GO:0016874">
    <property type="term" value="F:ligase activity"/>
    <property type="evidence" value="ECO:0007669"/>
    <property type="project" value="UniProtKB-KW"/>
</dbReference>
<dbReference type="GO" id="GO:0008168">
    <property type="term" value="F:methyltransferase activity"/>
    <property type="evidence" value="ECO:0007669"/>
    <property type="project" value="UniProtKB-KW"/>
</dbReference>
<dbReference type="GO" id="GO:0031177">
    <property type="term" value="F:phosphopantetheine binding"/>
    <property type="evidence" value="ECO:0007669"/>
    <property type="project" value="InterPro"/>
</dbReference>
<dbReference type="GO" id="GO:0043041">
    <property type="term" value="P:amino acid activation for nonribosomal peptide biosynthetic process"/>
    <property type="evidence" value="ECO:0007669"/>
    <property type="project" value="TreeGrafter"/>
</dbReference>
<dbReference type="GO" id="GO:0032259">
    <property type="term" value="P:methylation"/>
    <property type="evidence" value="ECO:0007669"/>
    <property type="project" value="UniProtKB-KW"/>
</dbReference>
<dbReference type="GO" id="GO:0044550">
    <property type="term" value="P:secondary metabolite biosynthetic process"/>
    <property type="evidence" value="ECO:0007669"/>
    <property type="project" value="TreeGrafter"/>
</dbReference>
<dbReference type="CDD" id="cd05930">
    <property type="entry name" value="A_NRPS"/>
    <property type="match status" value="1"/>
</dbReference>
<dbReference type="CDD" id="cd05918">
    <property type="entry name" value="A_NRPS_SidN3_like"/>
    <property type="match status" value="1"/>
</dbReference>
<dbReference type="CDD" id="cd02440">
    <property type="entry name" value="AdoMet_MTases"/>
    <property type="match status" value="1"/>
</dbReference>
<dbReference type="CDD" id="cd19542">
    <property type="entry name" value="CT_NRPS-like"/>
    <property type="match status" value="1"/>
</dbReference>
<dbReference type="CDD" id="cd19545">
    <property type="entry name" value="FUM14_C_NRPS-like"/>
    <property type="match status" value="1"/>
</dbReference>
<dbReference type="CDD" id="cd19531">
    <property type="entry name" value="LCL_NRPS-like"/>
    <property type="match status" value="1"/>
</dbReference>
<dbReference type="FunFam" id="3.30.300.30:FF:000084">
    <property type="entry name" value="Enniatin synthase"/>
    <property type="match status" value="1"/>
</dbReference>
<dbReference type="FunFam" id="3.30.300.30:FF:000015">
    <property type="entry name" value="Nonribosomal peptide synthase SidD"/>
    <property type="match status" value="1"/>
</dbReference>
<dbReference type="Gene3D" id="3.30.300.30">
    <property type="match status" value="3"/>
</dbReference>
<dbReference type="Gene3D" id="1.10.1200.10">
    <property type="entry name" value="ACP-like"/>
    <property type="match status" value="2"/>
</dbReference>
<dbReference type="Gene3D" id="3.40.50.1820">
    <property type="entry name" value="alpha/beta hydrolase"/>
    <property type="match status" value="1"/>
</dbReference>
<dbReference type="Gene3D" id="3.30.559.10">
    <property type="entry name" value="Chloramphenicol acetyltransferase-like domain"/>
    <property type="match status" value="3"/>
</dbReference>
<dbReference type="Gene3D" id="3.40.50.12780">
    <property type="entry name" value="N-terminal domain of ligase-like"/>
    <property type="match status" value="3"/>
</dbReference>
<dbReference type="Gene3D" id="3.30.559.30">
    <property type="entry name" value="Nonribosomal peptide synthetase, condensation domain"/>
    <property type="match status" value="3"/>
</dbReference>
<dbReference type="Gene3D" id="3.40.50.150">
    <property type="entry name" value="Vaccinia Virus protein VP39"/>
    <property type="match status" value="1"/>
</dbReference>
<dbReference type="InterPro" id="IPR029058">
    <property type="entry name" value="AB_hydrolase_fold"/>
</dbReference>
<dbReference type="InterPro" id="IPR036736">
    <property type="entry name" value="ACP-like_sf"/>
</dbReference>
<dbReference type="InterPro" id="IPR045851">
    <property type="entry name" value="AMP-bd_C_sf"/>
</dbReference>
<dbReference type="InterPro" id="IPR020845">
    <property type="entry name" value="AMP-binding_CS"/>
</dbReference>
<dbReference type="InterPro" id="IPR000873">
    <property type="entry name" value="AMP-dep_synth/lig_dom"/>
</dbReference>
<dbReference type="InterPro" id="IPR042099">
    <property type="entry name" value="ANL_N_sf"/>
</dbReference>
<dbReference type="InterPro" id="IPR023213">
    <property type="entry name" value="CAT-like_dom_sf"/>
</dbReference>
<dbReference type="InterPro" id="IPR001242">
    <property type="entry name" value="Condensatn"/>
</dbReference>
<dbReference type="InterPro" id="IPR020806">
    <property type="entry name" value="PKS_PP-bd"/>
</dbReference>
<dbReference type="InterPro" id="IPR009081">
    <property type="entry name" value="PP-bd_ACP"/>
</dbReference>
<dbReference type="InterPro" id="IPR006162">
    <property type="entry name" value="Ppantetheine_attach_site"/>
</dbReference>
<dbReference type="InterPro" id="IPR029063">
    <property type="entry name" value="SAM-dependent_MTases_sf"/>
</dbReference>
<dbReference type="PANTHER" id="PTHR45527:SF1">
    <property type="entry name" value="FATTY ACID SYNTHASE"/>
    <property type="match status" value="1"/>
</dbReference>
<dbReference type="PANTHER" id="PTHR45527">
    <property type="entry name" value="NONRIBOSOMAL PEPTIDE SYNTHETASE"/>
    <property type="match status" value="1"/>
</dbReference>
<dbReference type="Pfam" id="PF00501">
    <property type="entry name" value="AMP-binding"/>
    <property type="match status" value="2"/>
</dbReference>
<dbReference type="Pfam" id="PF00668">
    <property type="entry name" value="Condensation"/>
    <property type="match status" value="2"/>
</dbReference>
<dbReference type="Pfam" id="PF00550">
    <property type="entry name" value="PP-binding"/>
    <property type="match status" value="3"/>
</dbReference>
<dbReference type="SMART" id="SM00823">
    <property type="entry name" value="PKS_PP"/>
    <property type="match status" value="3"/>
</dbReference>
<dbReference type="SUPFAM" id="SSF56801">
    <property type="entry name" value="Acetyl-CoA synthetase-like"/>
    <property type="match status" value="2"/>
</dbReference>
<dbReference type="SUPFAM" id="SSF47336">
    <property type="entry name" value="ACP-like"/>
    <property type="match status" value="3"/>
</dbReference>
<dbReference type="SUPFAM" id="SSF52777">
    <property type="entry name" value="CoA-dependent acyltransferases"/>
    <property type="match status" value="6"/>
</dbReference>
<dbReference type="SUPFAM" id="SSF53335">
    <property type="entry name" value="S-adenosyl-L-methionine-dependent methyltransferases"/>
    <property type="match status" value="1"/>
</dbReference>
<dbReference type="PROSITE" id="PS00455">
    <property type="entry name" value="AMP_BINDING"/>
    <property type="match status" value="2"/>
</dbReference>
<dbReference type="PROSITE" id="PS50075">
    <property type="entry name" value="CARRIER"/>
    <property type="match status" value="3"/>
</dbReference>
<dbReference type="PROSITE" id="PS00012">
    <property type="entry name" value="PHOSPHOPANTETHEINE"/>
    <property type="match status" value="3"/>
</dbReference>